<name>SYT_EHRCJ</name>
<protein>
    <recommendedName>
        <fullName evidence="1">Threonine--tRNA ligase</fullName>
        <ecNumber evidence="1">6.1.1.3</ecNumber>
    </recommendedName>
    <alternativeName>
        <fullName evidence="1">Threonyl-tRNA synthetase</fullName>
        <shortName evidence="1">ThrRS</shortName>
    </alternativeName>
</protein>
<sequence>MINIYFNNNLCKQFHRGIKGYDVVADLFPELKNKAIAVKVNGESYDLSREITENCTFEVITTNSEEGLEIIRHDTAHIMAQAVKEIFPDTQITIGPTIKDGFYYDFATEHNFSSNDLEIIEKKMIEIINKNESFIREVWTREEAIKFFSSIGEDYKVKIISKIPNNENITVYKQGNFIDLCRGPHAPSTKTSKSFKLTKVSGSYWQGNSSNEKLQRIYGTAWRNEEELKSYLNNLIEIEKRDHRKIGKELELFHIQNEACGQVFWHKKGWTIYRTIENYIRKKLETNGYIEVKTPMLLNKELWEKSGHWDKFRENMFLSEAEDKVLAIKPMNCPCHIQIFNSKIRSYRDLPIRMAEFGICHRYEASGALHGLMRVRGFTQDDAHIFCTESQVISEALKFCNLLMEVYKDFGFTNILVKFSDRPENRAGSDETWDRAESALKKSVEAANLNYVLNPGDGAFYGPKLEFVLKDAIGREWQCGTLQMDFVLPERLGAYYVGSDGKKHHPIMLHRAILGTFERFIGILIEHHSGKFPIWLAPTQLSILTISEESIEYANSLKTKAEEHNIRVELDATNEKINYKIRNHIHKKIPVFWIVGKKEVNENSVSIRYLESNTQQVMPIDKALKTLLTCVSI</sequence>
<keyword id="KW-0030">Aminoacyl-tRNA synthetase</keyword>
<keyword id="KW-0067">ATP-binding</keyword>
<keyword id="KW-0963">Cytoplasm</keyword>
<keyword id="KW-0436">Ligase</keyword>
<keyword id="KW-0479">Metal-binding</keyword>
<keyword id="KW-0547">Nucleotide-binding</keyword>
<keyword id="KW-0648">Protein biosynthesis</keyword>
<keyword id="KW-0694">RNA-binding</keyword>
<keyword id="KW-0820">tRNA-binding</keyword>
<keyword id="KW-0862">Zinc</keyword>
<organism>
    <name type="scientific">Ehrlichia canis (strain Jake)</name>
    <dbReference type="NCBI Taxonomy" id="269484"/>
    <lineage>
        <taxon>Bacteria</taxon>
        <taxon>Pseudomonadati</taxon>
        <taxon>Pseudomonadota</taxon>
        <taxon>Alphaproteobacteria</taxon>
        <taxon>Rickettsiales</taxon>
        <taxon>Anaplasmataceae</taxon>
        <taxon>Ehrlichia</taxon>
    </lineage>
</organism>
<reference key="1">
    <citation type="journal article" date="2006" name="J. Bacteriol.">
        <title>The genome of the obligately intracellular bacterium Ehrlichia canis reveals themes of complex membrane structure and immune evasion strategies.</title>
        <authorList>
            <person name="Mavromatis K."/>
            <person name="Doyle C.K."/>
            <person name="Lykidis A."/>
            <person name="Ivanova N."/>
            <person name="Francino M.P."/>
            <person name="Chain P."/>
            <person name="Shin M."/>
            <person name="Malfatti S."/>
            <person name="Larimer F."/>
            <person name="Copeland A."/>
            <person name="Detter J.C."/>
            <person name="Land M."/>
            <person name="Richardson P.M."/>
            <person name="Yu X.J."/>
            <person name="Walker D.H."/>
            <person name="McBride J.W."/>
            <person name="Kyrpides N.C."/>
        </authorList>
    </citation>
    <scope>NUCLEOTIDE SEQUENCE [LARGE SCALE GENOMIC DNA]</scope>
    <source>
        <strain>Jake</strain>
    </source>
</reference>
<dbReference type="EC" id="6.1.1.3" evidence="1"/>
<dbReference type="EMBL" id="CP000107">
    <property type="protein sequence ID" value="AAZ68965.1"/>
    <property type="molecule type" value="Genomic_DNA"/>
</dbReference>
<dbReference type="RefSeq" id="WP_011305038.1">
    <property type="nucleotide sequence ID" value="NC_007354.1"/>
</dbReference>
<dbReference type="SMR" id="Q3YQP0"/>
<dbReference type="FunCoup" id="Q3YQP0">
    <property type="interactions" value="335"/>
</dbReference>
<dbReference type="STRING" id="269484.Ecaj_0934"/>
<dbReference type="KEGG" id="ecn:Ecaj_0934"/>
<dbReference type="eggNOG" id="COG0441">
    <property type="taxonomic scope" value="Bacteria"/>
</dbReference>
<dbReference type="HOGENOM" id="CLU_008554_0_1_5"/>
<dbReference type="InParanoid" id="Q3YQP0"/>
<dbReference type="Proteomes" id="UP000000435">
    <property type="component" value="Chromosome"/>
</dbReference>
<dbReference type="GO" id="GO:0005737">
    <property type="term" value="C:cytoplasm"/>
    <property type="evidence" value="ECO:0007669"/>
    <property type="project" value="UniProtKB-SubCell"/>
</dbReference>
<dbReference type="GO" id="GO:0005524">
    <property type="term" value="F:ATP binding"/>
    <property type="evidence" value="ECO:0007669"/>
    <property type="project" value="UniProtKB-UniRule"/>
</dbReference>
<dbReference type="GO" id="GO:0046872">
    <property type="term" value="F:metal ion binding"/>
    <property type="evidence" value="ECO:0007669"/>
    <property type="project" value="UniProtKB-KW"/>
</dbReference>
<dbReference type="GO" id="GO:0004829">
    <property type="term" value="F:threonine-tRNA ligase activity"/>
    <property type="evidence" value="ECO:0007669"/>
    <property type="project" value="UniProtKB-UniRule"/>
</dbReference>
<dbReference type="GO" id="GO:0000049">
    <property type="term" value="F:tRNA binding"/>
    <property type="evidence" value="ECO:0007669"/>
    <property type="project" value="UniProtKB-KW"/>
</dbReference>
<dbReference type="GO" id="GO:0006435">
    <property type="term" value="P:threonyl-tRNA aminoacylation"/>
    <property type="evidence" value="ECO:0007669"/>
    <property type="project" value="UniProtKB-UniRule"/>
</dbReference>
<dbReference type="CDD" id="cd01667">
    <property type="entry name" value="TGS_ThrRS"/>
    <property type="match status" value="1"/>
</dbReference>
<dbReference type="CDD" id="cd00860">
    <property type="entry name" value="ThrRS_anticodon"/>
    <property type="match status" value="1"/>
</dbReference>
<dbReference type="CDD" id="cd00771">
    <property type="entry name" value="ThrRS_core"/>
    <property type="match status" value="1"/>
</dbReference>
<dbReference type="FunFam" id="3.30.54.20:FF:000002">
    <property type="entry name" value="Threonine--tRNA ligase"/>
    <property type="match status" value="1"/>
</dbReference>
<dbReference type="FunFam" id="3.30.930.10:FF:000002">
    <property type="entry name" value="Threonine--tRNA ligase"/>
    <property type="match status" value="1"/>
</dbReference>
<dbReference type="FunFam" id="3.40.50.800:FF:000001">
    <property type="entry name" value="Threonine--tRNA ligase"/>
    <property type="match status" value="1"/>
</dbReference>
<dbReference type="FunFam" id="3.30.980.10:FF:000005">
    <property type="entry name" value="Threonyl-tRNA synthetase, mitochondrial"/>
    <property type="match status" value="1"/>
</dbReference>
<dbReference type="Gene3D" id="3.10.20.30">
    <property type="match status" value="1"/>
</dbReference>
<dbReference type="Gene3D" id="3.30.54.20">
    <property type="match status" value="1"/>
</dbReference>
<dbReference type="Gene3D" id="3.40.50.800">
    <property type="entry name" value="Anticodon-binding domain"/>
    <property type="match status" value="1"/>
</dbReference>
<dbReference type="Gene3D" id="3.30.930.10">
    <property type="entry name" value="Bira Bifunctional Protein, Domain 2"/>
    <property type="match status" value="1"/>
</dbReference>
<dbReference type="Gene3D" id="3.30.980.10">
    <property type="entry name" value="Threonyl-trna Synthetase, Chain A, domain 2"/>
    <property type="match status" value="1"/>
</dbReference>
<dbReference type="HAMAP" id="MF_00184">
    <property type="entry name" value="Thr_tRNA_synth"/>
    <property type="match status" value="1"/>
</dbReference>
<dbReference type="InterPro" id="IPR002314">
    <property type="entry name" value="aa-tRNA-synt_IIb"/>
</dbReference>
<dbReference type="InterPro" id="IPR006195">
    <property type="entry name" value="aa-tRNA-synth_II"/>
</dbReference>
<dbReference type="InterPro" id="IPR045864">
    <property type="entry name" value="aa-tRNA-synth_II/BPL/LPL"/>
</dbReference>
<dbReference type="InterPro" id="IPR004154">
    <property type="entry name" value="Anticodon-bd"/>
</dbReference>
<dbReference type="InterPro" id="IPR036621">
    <property type="entry name" value="Anticodon-bd_dom_sf"/>
</dbReference>
<dbReference type="InterPro" id="IPR012675">
    <property type="entry name" value="Beta-grasp_dom_sf"/>
</dbReference>
<dbReference type="InterPro" id="IPR004095">
    <property type="entry name" value="TGS"/>
</dbReference>
<dbReference type="InterPro" id="IPR012676">
    <property type="entry name" value="TGS-like"/>
</dbReference>
<dbReference type="InterPro" id="IPR002320">
    <property type="entry name" value="Thr-tRNA-ligase_IIa"/>
</dbReference>
<dbReference type="InterPro" id="IPR018163">
    <property type="entry name" value="Thr/Ala-tRNA-synth_IIc_edit"/>
</dbReference>
<dbReference type="InterPro" id="IPR047246">
    <property type="entry name" value="ThrRS_anticodon"/>
</dbReference>
<dbReference type="InterPro" id="IPR033728">
    <property type="entry name" value="ThrRS_core"/>
</dbReference>
<dbReference type="InterPro" id="IPR012947">
    <property type="entry name" value="tRNA_SAD"/>
</dbReference>
<dbReference type="NCBIfam" id="TIGR00418">
    <property type="entry name" value="thrS"/>
    <property type="match status" value="1"/>
</dbReference>
<dbReference type="PANTHER" id="PTHR11451:SF44">
    <property type="entry name" value="THREONINE--TRNA LIGASE, CHLOROPLASTIC_MITOCHONDRIAL 2"/>
    <property type="match status" value="1"/>
</dbReference>
<dbReference type="PANTHER" id="PTHR11451">
    <property type="entry name" value="THREONINE-TRNA LIGASE"/>
    <property type="match status" value="1"/>
</dbReference>
<dbReference type="Pfam" id="PF03129">
    <property type="entry name" value="HGTP_anticodon"/>
    <property type="match status" value="1"/>
</dbReference>
<dbReference type="Pfam" id="PF02824">
    <property type="entry name" value="TGS"/>
    <property type="match status" value="1"/>
</dbReference>
<dbReference type="Pfam" id="PF00587">
    <property type="entry name" value="tRNA-synt_2b"/>
    <property type="match status" value="1"/>
</dbReference>
<dbReference type="Pfam" id="PF07973">
    <property type="entry name" value="tRNA_SAD"/>
    <property type="match status" value="1"/>
</dbReference>
<dbReference type="PRINTS" id="PR01047">
    <property type="entry name" value="TRNASYNTHTHR"/>
</dbReference>
<dbReference type="SMART" id="SM00863">
    <property type="entry name" value="tRNA_SAD"/>
    <property type="match status" value="1"/>
</dbReference>
<dbReference type="SUPFAM" id="SSF52954">
    <property type="entry name" value="Class II aaRS ABD-related"/>
    <property type="match status" value="1"/>
</dbReference>
<dbReference type="SUPFAM" id="SSF55681">
    <property type="entry name" value="Class II aaRS and biotin synthetases"/>
    <property type="match status" value="1"/>
</dbReference>
<dbReference type="SUPFAM" id="SSF81271">
    <property type="entry name" value="TGS-like"/>
    <property type="match status" value="1"/>
</dbReference>
<dbReference type="SUPFAM" id="SSF55186">
    <property type="entry name" value="ThrRS/AlaRS common domain"/>
    <property type="match status" value="1"/>
</dbReference>
<dbReference type="PROSITE" id="PS50862">
    <property type="entry name" value="AA_TRNA_LIGASE_II"/>
    <property type="match status" value="1"/>
</dbReference>
<dbReference type="PROSITE" id="PS51880">
    <property type="entry name" value="TGS"/>
    <property type="match status" value="1"/>
</dbReference>
<accession>Q3YQP0</accession>
<comment type="function">
    <text evidence="1">Catalyzes the attachment of threonine to tRNA(Thr) in a two-step reaction: L-threonine is first activated by ATP to form Thr-AMP and then transferred to the acceptor end of tRNA(Thr). Also edits incorrectly charged L-seryl-tRNA(Thr).</text>
</comment>
<comment type="catalytic activity">
    <reaction evidence="1">
        <text>tRNA(Thr) + L-threonine + ATP = L-threonyl-tRNA(Thr) + AMP + diphosphate + H(+)</text>
        <dbReference type="Rhea" id="RHEA:24624"/>
        <dbReference type="Rhea" id="RHEA-COMP:9670"/>
        <dbReference type="Rhea" id="RHEA-COMP:9704"/>
        <dbReference type="ChEBI" id="CHEBI:15378"/>
        <dbReference type="ChEBI" id="CHEBI:30616"/>
        <dbReference type="ChEBI" id="CHEBI:33019"/>
        <dbReference type="ChEBI" id="CHEBI:57926"/>
        <dbReference type="ChEBI" id="CHEBI:78442"/>
        <dbReference type="ChEBI" id="CHEBI:78534"/>
        <dbReference type="ChEBI" id="CHEBI:456215"/>
        <dbReference type="EC" id="6.1.1.3"/>
    </reaction>
</comment>
<comment type="cofactor">
    <cofactor evidence="1">
        <name>Zn(2+)</name>
        <dbReference type="ChEBI" id="CHEBI:29105"/>
    </cofactor>
    <text evidence="1">Binds 1 zinc ion per subunit.</text>
</comment>
<comment type="subunit">
    <text evidence="1">Homodimer.</text>
</comment>
<comment type="subcellular location">
    <subcellularLocation>
        <location evidence="1">Cytoplasm</location>
    </subcellularLocation>
</comment>
<comment type="similarity">
    <text evidence="1">Belongs to the class-II aminoacyl-tRNA synthetase family.</text>
</comment>
<gene>
    <name evidence="1" type="primary">thrS</name>
    <name type="ordered locus">Ecaj_0934</name>
</gene>
<evidence type="ECO:0000255" key="1">
    <source>
        <dbReference type="HAMAP-Rule" id="MF_00184"/>
    </source>
</evidence>
<evidence type="ECO:0000255" key="2">
    <source>
        <dbReference type="PROSITE-ProRule" id="PRU01228"/>
    </source>
</evidence>
<feature type="chain" id="PRO_1000020386" description="Threonine--tRNA ligase">
    <location>
        <begin position="1"/>
        <end position="633"/>
    </location>
</feature>
<feature type="domain" description="TGS" evidence="2">
    <location>
        <begin position="1"/>
        <end position="61"/>
    </location>
</feature>
<feature type="region of interest" description="Catalytic" evidence="1">
    <location>
        <begin position="242"/>
        <end position="533"/>
    </location>
</feature>
<feature type="binding site" evidence="1">
    <location>
        <position position="333"/>
    </location>
    <ligand>
        <name>Zn(2+)</name>
        <dbReference type="ChEBI" id="CHEBI:29105"/>
    </ligand>
</feature>
<feature type="binding site" evidence="1">
    <location>
        <position position="384"/>
    </location>
    <ligand>
        <name>Zn(2+)</name>
        <dbReference type="ChEBI" id="CHEBI:29105"/>
    </ligand>
</feature>
<feature type="binding site" evidence="1">
    <location>
        <position position="510"/>
    </location>
    <ligand>
        <name>Zn(2+)</name>
        <dbReference type="ChEBI" id="CHEBI:29105"/>
    </ligand>
</feature>
<proteinExistence type="inferred from homology"/>